<dbReference type="EC" id="3.1.-.-" evidence="1"/>
<dbReference type="EMBL" id="AE017283">
    <property type="protein sequence ID" value="AAT82690.1"/>
    <property type="molecule type" value="Genomic_DNA"/>
</dbReference>
<dbReference type="RefSeq" id="WP_002513785.1">
    <property type="nucleotide sequence ID" value="NZ_CP025935.1"/>
</dbReference>
<dbReference type="SMR" id="Q6A976"/>
<dbReference type="EnsemblBacteria" id="AAT82690">
    <property type="protein sequence ID" value="AAT82690"/>
    <property type="gene ID" value="PPA0937"/>
</dbReference>
<dbReference type="KEGG" id="pac:PPA0937"/>
<dbReference type="eggNOG" id="COG0319">
    <property type="taxonomic scope" value="Bacteria"/>
</dbReference>
<dbReference type="HOGENOM" id="CLU_106710_3_2_11"/>
<dbReference type="Proteomes" id="UP000000603">
    <property type="component" value="Chromosome"/>
</dbReference>
<dbReference type="GO" id="GO:0005737">
    <property type="term" value="C:cytoplasm"/>
    <property type="evidence" value="ECO:0007669"/>
    <property type="project" value="UniProtKB-SubCell"/>
</dbReference>
<dbReference type="GO" id="GO:0004222">
    <property type="term" value="F:metalloendopeptidase activity"/>
    <property type="evidence" value="ECO:0007669"/>
    <property type="project" value="InterPro"/>
</dbReference>
<dbReference type="GO" id="GO:0004521">
    <property type="term" value="F:RNA endonuclease activity"/>
    <property type="evidence" value="ECO:0007669"/>
    <property type="project" value="UniProtKB-UniRule"/>
</dbReference>
<dbReference type="GO" id="GO:0008270">
    <property type="term" value="F:zinc ion binding"/>
    <property type="evidence" value="ECO:0007669"/>
    <property type="project" value="UniProtKB-UniRule"/>
</dbReference>
<dbReference type="GO" id="GO:0006364">
    <property type="term" value="P:rRNA processing"/>
    <property type="evidence" value="ECO:0007669"/>
    <property type="project" value="UniProtKB-UniRule"/>
</dbReference>
<dbReference type="Gene3D" id="3.40.390.30">
    <property type="entry name" value="Metalloproteases ('zincins'), catalytic domain"/>
    <property type="match status" value="1"/>
</dbReference>
<dbReference type="HAMAP" id="MF_00009">
    <property type="entry name" value="Endoribonucl_YbeY"/>
    <property type="match status" value="1"/>
</dbReference>
<dbReference type="InterPro" id="IPR023091">
    <property type="entry name" value="MetalPrtase_cat_dom_sf_prd"/>
</dbReference>
<dbReference type="InterPro" id="IPR002036">
    <property type="entry name" value="YbeY"/>
</dbReference>
<dbReference type="InterPro" id="IPR020549">
    <property type="entry name" value="YbeY_CS"/>
</dbReference>
<dbReference type="NCBIfam" id="TIGR00043">
    <property type="entry name" value="rRNA maturation RNase YbeY"/>
    <property type="match status" value="1"/>
</dbReference>
<dbReference type="PANTHER" id="PTHR46986">
    <property type="entry name" value="ENDORIBONUCLEASE YBEY, CHLOROPLASTIC"/>
    <property type="match status" value="1"/>
</dbReference>
<dbReference type="PANTHER" id="PTHR46986:SF1">
    <property type="entry name" value="ENDORIBONUCLEASE YBEY, CHLOROPLASTIC"/>
    <property type="match status" value="1"/>
</dbReference>
<dbReference type="Pfam" id="PF02130">
    <property type="entry name" value="YbeY"/>
    <property type="match status" value="1"/>
</dbReference>
<dbReference type="SUPFAM" id="SSF55486">
    <property type="entry name" value="Metalloproteases ('zincins'), catalytic domain"/>
    <property type="match status" value="1"/>
</dbReference>
<dbReference type="PROSITE" id="PS01306">
    <property type="entry name" value="UPF0054"/>
    <property type="match status" value="1"/>
</dbReference>
<feature type="chain" id="PRO_0000102506" description="Endoribonuclease YbeY">
    <location>
        <begin position="1"/>
        <end position="155"/>
    </location>
</feature>
<feature type="region of interest" description="Disordered" evidence="2">
    <location>
        <begin position="64"/>
        <end position="84"/>
    </location>
</feature>
<feature type="binding site" evidence="1">
    <location>
        <position position="115"/>
    </location>
    <ligand>
        <name>Zn(2+)</name>
        <dbReference type="ChEBI" id="CHEBI:29105"/>
        <note>catalytic</note>
    </ligand>
</feature>
<feature type="binding site" evidence="1">
    <location>
        <position position="119"/>
    </location>
    <ligand>
        <name>Zn(2+)</name>
        <dbReference type="ChEBI" id="CHEBI:29105"/>
        <note>catalytic</note>
    </ligand>
</feature>
<feature type="binding site" evidence="1">
    <location>
        <position position="125"/>
    </location>
    <ligand>
        <name>Zn(2+)</name>
        <dbReference type="ChEBI" id="CHEBI:29105"/>
        <note>catalytic</note>
    </ligand>
</feature>
<sequence length="155" mass="17083">MIDITNESGSPSNEEGLVGLATFALDRLRIHPSSELSIILVDEETMEAYHEKFMGLPGPTDVLSFPMDEMRAPGDDEDPPSGLLGDIVLCPTVTARQAAENGRTPDGEAEYLLIHGLLHLLGHDHAEPGEKRVMFRLNDEIIAAWDDHREQTGQR</sequence>
<gene>
    <name evidence="1" type="primary">ybeY</name>
    <name type="ordered locus">PPA0937</name>
</gene>
<keyword id="KW-0963">Cytoplasm</keyword>
<keyword id="KW-0255">Endonuclease</keyword>
<keyword id="KW-0378">Hydrolase</keyword>
<keyword id="KW-0479">Metal-binding</keyword>
<keyword id="KW-0540">Nuclease</keyword>
<keyword id="KW-0690">Ribosome biogenesis</keyword>
<keyword id="KW-0698">rRNA processing</keyword>
<keyword id="KW-0862">Zinc</keyword>
<protein>
    <recommendedName>
        <fullName evidence="1">Endoribonuclease YbeY</fullName>
        <ecNumber evidence="1">3.1.-.-</ecNumber>
    </recommendedName>
</protein>
<evidence type="ECO:0000255" key="1">
    <source>
        <dbReference type="HAMAP-Rule" id="MF_00009"/>
    </source>
</evidence>
<evidence type="ECO:0000256" key="2">
    <source>
        <dbReference type="SAM" id="MobiDB-lite"/>
    </source>
</evidence>
<accession>Q6A976</accession>
<proteinExistence type="inferred from homology"/>
<name>YBEY_CUTAK</name>
<reference key="1">
    <citation type="journal article" date="2004" name="Science">
        <title>The complete genome sequence of Propionibacterium acnes, a commensal of human skin.</title>
        <authorList>
            <person name="Brueggemann H."/>
            <person name="Henne A."/>
            <person name="Hoster F."/>
            <person name="Liesegang H."/>
            <person name="Wiezer A."/>
            <person name="Strittmatter A."/>
            <person name="Hujer S."/>
            <person name="Duerre P."/>
            <person name="Gottschalk G."/>
        </authorList>
    </citation>
    <scope>NUCLEOTIDE SEQUENCE [LARGE SCALE GENOMIC DNA]</scope>
    <source>
        <strain>DSM 16379 / KPA171202</strain>
    </source>
</reference>
<organism>
    <name type="scientific">Cutibacterium acnes (strain DSM 16379 / KPA171202)</name>
    <name type="common">Propionibacterium acnes</name>
    <dbReference type="NCBI Taxonomy" id="267747"/>
    <lineage>
        <taxon>Bacteria</taxon>
        <taxon>Bacillati</taxon>
        <taxon>Actinomycetota</taxon>
        <taxon>Actinomycetes</taxon>
        <taxon>Propionibacteriales</taxon>
        <taxon>Propionibacteriaceae</taxon>
        <taxon>Cutibacterium</taxon>
    </lineage>
</organism>
<comment type="function">
    <text evidence="1">Single strand-specific metallo-endoribonuclease involved in late-stage 70S ribosome quality control and in maturation of the 3' terminus of the 16S rRNA.</text>
</comment>
<comment type="cofactor">
    <cofactor evidence="1">
        <name>Zn(2+)</name>
        <dbReference type="ChEBI" id="CHEBI:29105"/>
    </cofactor>
    <text evidence="1">Binds 1 zinc ion.</text>
</comment>
<comment type="subcellular location">
    <subcellularLocation>
        <location evidence="1">Cytoplasm</location>
    </subcellularLocation>
</comment>
<comment type="similarity">
    <text evidence="1">Belongs to the endoribonuclease YbeY family.</text>
</comment>